<feature type="chain" id="PRO_0000337925" description="Cell cycle protein GpsB">
    <location>
        <begin position="1"/>
        <end position="113"/>
    </location>
</feature>
<feature type="coiled-coil region" evidence="1">
    <location>
        <begin position="36"/>
        <end position="68"/>
    </location>
</feature>
<accession>Q92AC0</accession>
<dbReference type="EMBL" id="AL596170">
    <property type="protein sequence ID" value="CAC97232.1"/>
    <property type="molecule type" value="Genomic_DNA"/>
</dbReference>
<dbReference type="PIR" id="AH1682">
    <property type="entry name" value="AH1682"/>
</dbReference>
<dbReference type="RefSeq" id="WP_003763055.1">
    <property type="nucleotide sequence ID" value="NC_003212.1"/>
</dbReference>
<dbReference type="SMR" id="Q92AC0"/>
<dbReference type="STRING" id="272626.gene:17566360"/>
<dbReference type="GeneID" id="93235340"/>
<dbReference type="KEGG" id="lin:lin2002"/>
<dbReference type="eggNOG" id="COG3599">
    <property type="taxonomic scope" value="Bacteria"/>
</dbReference>
<dbReference type="HOGENOM" id="CLU_140309_1_0_9"/>
<dbReference type="OrthoDB" id="389699at2"/>
<dbReference type="Proteomes" id="UP000002513">
    <property type="component" value="Chromosome"/>
</dbReference>
<dbReference type="GO" id="GO:0005737">
    <property type="term" value="C:cytoplasm"/>
    <property type="evidence" value="ECO:0007669"/>
    <property type="project" value="UniProtKB-SubCell"/>
</dbReference>
<dbReference type="GO" id="GO:0051301">
    <property type="term" value="P:cell division"/>
    <property type="evidence" value="ECO:0007669"/>
    <property type="project" value="UniProtKB-UniRule"/>
</dbReference>
<dbReference type="GO" id="GO:0008360">
    <property type="term" value="P:regulation of cell shape"/>
    <property type="evidence" value="ECO:0007669"/>
    <property type="project" value="UniProtKB-UniRule"/>
</dbReference>
<dbReference type="Gene3D" id="6.10.250.660">
    <property type="match status" value="1"/>
</dbReference>
<dbReference type="HAMAP" id="MF_02011">
    <property type="entry name" value="GpsB"/>
    <property type="match status" value="1"/>
</dbReference>
<dbReference type="InterPro" id="IPR011229">
    <property type="entry name" value="Cell_cycle_GpsB"/>
</dbReference>
<dbReference type="InterPro" id="IPR019933">
    <property type="entry name" value="DivIVA_domain"/>
</dbReference>
<dbReference type="InterPro" id="IPR007793">
    <property type="entry name" value="DivIVA_fam"/>
</dbReference>
<dbReference type="NCBIfam" id="TIGR03544">
    <property type="entry name" value="DivI1A_domain"/>
    <property type="match status" value="1"/>
</dbReference>
<dbReference type="NCBIfam" id="NF010725">
    <property type="entry name" value="PRK14127.1"/>
    <property type="match status" value="1"/>
</dbReference>
<dbReference type="PANTHER" id="PTHR35794:SF1">
    <property type="entry name" value="CELL CYCLE PROTEIN GPSB"/>
    <property type="match status" value="1"/>
</dbReference>
<dbReference type="PANTHER" id="PTHR35794">
    <property type="entry name" value="CELL DIVISION PROTEIN DIVIVA"/>
    <property type="match status" value="1"/>
</dbReference>
<dbReference type="Pfam" id="PF05103">
    <property type="entry name" value="DivIVA"/>
    <property type="match status" value="1"/>
</dbReference>
<dbReference type="PIRSF" id="PIRSF029938">
    <property type="entry name" value="UCP029938"/>
    <property type="match status" value="1"/>
</dbReference>
<keyword id="KW-0131">Cell cycle</keyword>
<keyword id="KW-0132">Cell division</keyword>
<keyword id="KW-0133">Cell shape</keyword>
<keyword id="KW-0175">Coiled coil</keyword>
<keyword id="KW-0963">Cytoplasm</keyword>
<sequence length="113" mass="12910">MTSEQFEYHLTGKEILEKEFKTGLRGYNPEDVDEFLDMVIKDYSTFTQEIEALQAENIRLVQELDNAPVRTTTQPAPTFQAAAQPAGTTNFDILKRLSNLEKHVFGNKLDDNE</sequence>
<organism>
    <name type="scientific">Listeria innocua serovar 6a (strain ATCC BAA-680 / CLIP 11262)</name>
    <dbReference type="NCBI Taxonomy" id="272626"/>
    <lineage>
        <taxon>Bacteria</taxon>
        <taxon>Bacillati</taxon>
        <taxon>Bacillota</taxon>
        <taxon>Bacilli</taxon>
        <taxon>Bacillales</taxon>
        <taxon>Listeriaceae</taxon>
        <taxon>Listeria</taxon>
    </lineage>
</organism>
<name>GPSB_LISIN</name>
<comment type="function">
    <text evidence="1">Divisome component that associates with the complex late in its assembly, after the Z-ring is formed, and is dependent on DivIC and PBP2B for its recruitment to the divisome. Together with EzrA, is a key component of the system that regulates PBP1 localization during cell cycle progression. Its main role could be the removal of PBP1 from the cell pole after pole maturation is completed. Also contributes to the recruitment of PBP1 to the division complex. Not essential for septum formation.</text>
</comment>
<comment type="subunit">
    <text evidence="1">Forms polymers through the coiled coil domains. Interacts with PBP1, MreC and EzrA.</text>
</comment>
<comment type="subcellular location">
    <subcellularLocation>
        <location evidence="1">Cytoplasm</location>
    </subcellularLocation>
    <text evidence="1">Shuttles between the lateral wall and the division site in a cell cycle-dependent manner.</text>
</comment>
<comment type="similarity">
    <text evidence="1">Belongs to the GpsB family.</text>
</comment>
<gene>
    <name evidence="1" type="primary">gpsB</name>
    <name type="ordered locus">lin2002</name>
</gene>
<reference key="1">
    <citation type="journal article" date="2001" name="Science">
        <title>Comparative genomics of Listeria species.</title>
        <authorList>
            <person name="Glaser P."/>
            <person name="Frangeul L."/>
            <person name="Buchrieser C."/>
            <person name="Rusniok C."/>
            <person name="Amend A."/>
            <person name="Baquero F."/>
            <person name="Berche P."/>
            <person name="Bloecker H."/>
            <person name="Brandt P."/>
            <person name="Chakraborty T."/>
            <person name="Charbit A."/>
            <person name="Chetouani F."/>
            <person name="Couve E."/>
            <person name="de Daruvar A."/>
            <person name="Dehoux P."/>
            <person name="Domann E."/>
            <person name="Dominguez-Bernal G."/>
            <person name="Duchaud E."/>
            <person name="Durant L."/>
            <person name="Dussurget O."/>
            <person name="Entian K.-D."/>
            <person name="Fsihi H."/>
            <person name="Garcia-del Portillo F."/>
            <person name="Garrido P."/>
            <person name="Gautier L."/>
            <person name="Goebel W."/>
            <person name="Gomez-Lopez N."/>
            <person name="Hain T."/>
            <person name="Hauf J."/>
            <person name="Jackson D."/>
            <person name="Jones L.-M."/>
            <person name="Kaerst U."/>
            <person name="Kreft J."/>
            <person name="Kuhn M."/>
            <person name="Kunst F."/>
            <person name="Kurapkat G."/>
            <person name="Madueno E."/>
            <person name="Maitournam A."/>
            <person name="Mata Vicente J."/>
            <person name="Ng E."/>
            <person name="Nedjari H."/>
            <person name="Nordsiek G."/>
            <person name="Novella S."/>
            <person name="de Pablos B."/>
            <person name="Perez-Diaz J.-C."/>
            <person name="Purcell R."/>
            <person name="Remmel B."/>
            <person name="Rose M."/>
            <person name="Schlueter T."/>
            <person name="Simoes N."/>
            <person name="Tierrez A."/>
            <person name="Vazquez-Boland J.-A."/>
            <person name="Voss H."/>
            <person name="Wehland J."/>
            <person name="Cossart P."/>
        </authorList>
    </citation>
    <scope>NUCLEOTIDE SEQUENCE [LARGE SCALE GENOMIC DNA]</scope>
    <source>
        <strain>ATCC BAA-680 / CLIP 11262</strain>
    </source>
</reference>
<evidence type="ECO:0000255" key="1">
    <source>
        <dbReference type="HAMAP-Rule" id="MF_02011"/>
    </source>
</evidence>
<proteinExistence type="inferred from homology"/>
<protein>
    <recommendedName>
        <fullName evidence="1">Cell cycle protein GpsB</fullName>
    </recommendedName>
    <alternativeName>
        <fullName evidence="1">Guiding PBP1-shuttling protein</fullName>
    </alternativeName>
</protein>